<protein>
    <recommendedName>
        <fullName evidence="2">Small ribosomal subunit protein uS12</fullName>
    </recommendedName>
    <alternativeName>
        <fullName>30S ribosomal protein S12</fullName>
    </alternativeName>
</protein>
<name>RS12_ECOL6</name>
<dbReference type="EMBL" id="AE014075">
    <property type="protein sequence ID" value="AAN82554.1"/>
    <property type="status" value="ALT_INIT"/>
    <property type="molecule type" value="Genomic_DNA"/>
</dbReference>
<dbReference type="RefSeq" id="WP_000246815.1">
    <property type="nucleotide sequence ID" value="NZ_CP051263.1"/>
</dbReference>
<dbReference type="SMR" id="P0A7S4"/>
<dbReference type="STRING" id="199310.c4116"/>
<dbReference type="GeneID" id="98390450"/>
<dbReference type="KEGG" id="ecc:c4116"/>
<dbReference type="eggNOG" id="COG0048">
    <property type="taxonomic scope" value="Bacteria"/>
</dbReference>
<dbReference type="HOGENOM" id="CLU_104295_1_2_6"/>
<dbReference type="Proteomes" id="UP000001410">
    <property type="component" value="Chromosome"/>
</dbReference>
<dbReference type="GO" id="GO:0015935">
    <property type="term" value="C:small ribosomal subunit"/>
    <property type="evidence" value="ECO:0007669"/>
    <property type="project" value="InterPro"/>
</dbReference>
<dbReference type="GO" id="GO:0019843">
    <property type="term" value="F:rRNA binding"/>
    <property type="evidence" value="ECO:0007669"/>
    <property type="project" value="UniProtKB-UniRule"/>
</dbReference>
<dbReference type="GO" id="GO:0003735">
    <property type="term" value="F:structural constituent of ribosome"/>
    <property type="evidence" value="ECO:0007669"/>
    <property type="project" value="InterPro"/>
</dbReference>
<dbReference type="GO" id="GO:0000049">
    <property type="term" value="F:tRNA binding"/>
    <property type="evidence" value="ECO:0007669"/>
    <property type="project" value="UniProtKB-UniRule"/>
</dbReference>
<dbReference type="GO" id="GO:0006412">
    <property type="term" value="P:translation"/>
    <property type="evidence" value="ECO:0007669"/>
    <property type="project" value="UniProtKB-UniRule"/>
</dbReference>
<dbReference type="CDD" id="cd03368">
    <property type="entry name" value="Ribosomal_S12"/>
    <property type="match status" value="1"/>
</dbReference>
<dbReference type="FunFam" id="2.40.50.140:FF:000001">
    <property type="entry name" value="30S ribosomal protein S12"/>
    <property type="match status" value="1"/>
</dbReference>
<dbReference type="Gene3D" id="2.40.50.140">
    <property type="entry name" value="Nucleic acid-binding proteins"/>
    <property type="match status" value="1"/>
</dbReference>
<dbReference type="HAMAP" id="MF_00403_B">
    <property type="entry name" value="Ribosomal_uS12_B"/>
    <property type="match status" value="1"/>
</dbReference>
<dbReference type="InterPro" id="IPR012340">
    <property type="entry name" value="NA-bd_OB-fold"/>
</dbReference>
<dbReference type="InterPro" id="IPR006032">
    <property type="entry name" value="Ribosomal_uS12"/>
</dbReference>
<dbReference type="InterPro" id="IPR005679">
    <property type="entry name" value="Ribosomal_uS12_bac"/>
</dbReference>
<dbReference type="NCBIfam" id="TIGR00981">
    <property type="entry name" value="rpsL_bact"/>
    <property type="match status" value="1"/>
</dbReference>
<dbReference type="PANTHER" id="PTHR11652">
    <property type="entry name" value="30S RIBOSOMAL PROTEIN S12 FAMILY MEMBER"/>
    <property type="match status" value="1"/>
</dbReference>
<dbReference type="Pfam" id="PF00164">
    <property type="entry name" value="Ribosom_S12_S23"/>
    <property type="match status" value="1"/>
</dbReference>
<dbReference type="PIRSF" id="PIRSF002133">
    <property type="entry name" value="Ribosomal_S12/S23"/>
    <property type="match status" value="1"/>
</dbReference>
<dbReference type="PRINTS" id="PR01034">
    <property type="entry name" value="RIBOSOMALS12"/>
</dbReference>
<dbReference type="SUPFAM" id="SSF50249">
    <property type="entry name" value="Nucleic acid-binding proteins"/>
    <property type="match status" value="1"/>
</dbReference>
<dbReference type="PROSITE" id="PS00055">
    <property type="entry name" value="RIBOSOMAL_S12"/>
    <property type="match status" value="1"/>
</dbReference>
<accession>P0A7S4</accession>
<accession>P02367</accession>
<accession>Q9F5N3</accession>
<gene>
    <name type="primary">rpsL</name>
    <name type="synonym">strA</name>
    <name type="ordered locus">c4116</name>
</gene>
<proteinExistence type="inferred from homology"/>
<organism>
    <name type="scientific">Escherichia coli O6:H1 (strain CFT073 / ATCC 700928 / UPEC)</name>
    <dbReference type="NCBI Taxonomy" id="199310"/>
    <lineage>
        <taxon>Bacteria</taxon>
        <taxon>Pseudomonadati</taxon>
        <taxon>Pseudomonadota</taxon>
        <taxon>Gammaproteobacteria</taxon>
        <taxon>Enterobacterales</taxon>
        <taxon>Enterobacteriaceae</taxon>
        <taxon>Escherichia</taxon>
    </lineage>
</organism>
<comment type="function">
    <text evidence="1">With S4 and S5 plays an important role in translational accuracy.</text>
</comment>
<comment type="function">
    <text evidence="1">Interacts with and stabilizes bases of the 16S rRNA that are involved in tRNA selection in the A site and with the mRNA backbone. Located at the interface of the 30S and 50S subunits, it traverses the body of the 30S subunit contacting proteins on the other side and probably holding the rRNA structure together. The combined cluster of proteins S8, S12 and S17 appears to hold together the shoulder and platform of the 30S subunit (By similarity).</text>
</comment>
<comment type="subunit">
    <text evidence="1">Part of the 30S ribosomal subunit. Contacts proteins S8 and S17. May interact with IF1 in the 30S initiation complex (By similarity).</text>
</comment>
<comment type="similarity">
    <text evidence="2">Belongs to the universal ribosomal protein uS12 family.</text>
</comment>
<comment type="sequence caution" evidence="2">
    <conflict type="erroneous initiation">
        <sequence resource="EMBL-CDS" id="AAN82554"/>
    </conflict>
</comment>
<feature type="initiator methionine" description="Removed" evidence="1">
    <location>
        <position position="1"/>
    </location>
</feature>
<feature type="chain" id="PRO_0000146220" description="Small ribosomal subunit protein uS12">
    <location>
        <begin position="2"/>
        <end position="124"/>
    </location>
</feature>
<feature type="modified residue" description="3-methylthioaspartic acid" evidence="1">
    <location>
        <position position="89"/>
    </location>
</feature>
<feature type="modified residue" description="N6-acetyllysine" evidence="1">
    <location>
        <position position="108"/>
    </location>
</feature>
<sequence length="124" mass="13737">MATVNQLVRKPRARKVAKSNVPALEACPQKRGVCTRVYTTTPKKPNSALRKVCRVRLTNGFEVTSYIGGEGHNLQEHSVILIRGGRVKDLPGVRYHTVRGALDCSGVKDRKQARSKYGVKRPKA</sequence>
<evidence type="ECO:0000250" key="1"/>
<evidence type="ECO:0000305" key="2"/>
<reference key="1">
    <citation type="journal article" date="2002" name="Proc. Natl. Acad. Sci. U.S.A.">
        <title>Extensive mosaic structure revealed by the complete genome sequence of uropathogenic Escherichia coli.</title>
        <authorList>
            <person name="Welch R.A."/>
            <person name="Burland V."/>
            <person name="Plunkett G. III"/>
            <person name="Redford P."/>
            <person name="Roesch P."/>
            <person name="Rasko D."/>
            <person name="Buckles E.L."/>
            <person name="Liou S.-R."/>
            <person name="Boutin A."/>
            <person name="Hackett J."/>
            <person name="Stroud D."/>
            <person name="Mayhew G.F."/>
            <person name="Rose D.J."/>
            <person name="Zhou S."/>
            <person name="Schwartz D.C."/>
            <person name="Perna N.T."/>
            <person name="Mobley H.L.T."/>
            <person name="Donnenberg M.S."/>
            <person name="Blattner F.R."/>
        </authorList>
    </citation>
    <scope>NUCLEOTIDE SEQUENCE [LARGE SCALE GENOMIC DNA]</scope>
    <source>
        <strain>CFT073 / ATCC 700928 / UPEC</strain>
    </source>
</reference>
<keyword id="KW-0007">Acetylation</keyword>
<keyword id="KW-0488">Methylation</keyword>
<keyword id="KW-1185">Reference proteome</keyword>
<keyword id="KW-0687">Ribonucleoprotein</keyword>
<keyword id="KW-0689">Ribosomal protein</keyword>
<keyword id="KW-0694">RNA-binding</keyword>
<keyword id="KW-0699">rRNA-binding</keyword>
<keyword id="KW-0820">tRNA-binding</keyword>